<name>LPXA_SYNFM</name>
<gene>
    <name evidence="1" type="primary">lpxA</name>
    <name type="ordered locus">Sfum_3749</name>
</gene>
<accession>A0LPR7</accession>
<reference key="1">
    <citation type="submission" date="2006-10" db="EMBL/GenBank/DDBJ databases">
        <title>Complete sequence of Syntrophobacter fumaroxidans MPOB.</title>
        <authorList>
            <consortium name="US DOE Joint Genome Institute"/>
            <person name="Copeland A."/>
            <person name="Lucas S."/>
            <person name="Lapidus A."/>
            <person name="Barry K."/>
            <person name="Detter J.C."/>
            <person name="Glavina del Rio T."/>
            <person name="Hammon N."/>
            <person name="Israni S."/>
            <person name="Pitluck S."/>
            <person name="Goltsman E.G."/>
            <person name="Martinez M."/>
            <person name="Schmutz J."/>
            <person name="Larimer F."/>
            <person name="Land M."/>
            <person name="Hauser L."/>
            <person name="Kyrpides N."/>
            <person name="Kim E."/>
            <person name="Boone D.R."/>
            <person name="Brockman F."/>
            <person name="Culley D."/>
            <person name="Ferry J."/>
            <person name="Gunsalus R."/>
            <person name="McInerney M.J."/>
            <person name="Morrison M."/>
            <person name="Plugge C."/>
            <person name="Rohlin L."/>
            <person name="Scholten J."/>
            <person name="Sieber J."/>
            <person name="Stams A.J.M."/>
            <person name="Worm P."/>
            <person name="Henstra A.M."/>
            <person name="Richardson P."/>
        </authorList>
    </citation>
    <scope>NUCLEOTIDE SEQUENCE [LARGE SCALE GENOMIC DNA]</scope>
    <source>
        <strain>DSM 10017 / MPOB</strain>
    </source>
</reference>
<protein>
    <recommendedName>
        <fullName evidence="1">Acyl-[acyl-carrier-protein]--UDP-N-acetylglucosamine O-acyltransferase</fullName>
        <shortName evidence="1">UDP-N-acetylglucosamine acyltransferase</shortName>
        <ecNumber evidence="1">2.3.1.129</ecNumber>
    </recommendedName>
</protein>
<evidence type="ECO:0000255" key="1">
    <source>
        <dbReference type="HAMAP-Rule" id="MF_00387"/>
    </source>
</evidence>
<proteinExistence type="inferred from homology"/>
<keyword id="KW-0012">Acyltransferase</keyword>
<keyword id="KW-0963">Cytoplasm</keyword>
<keyword id="KW-0441">Lipid A biosynthesis</keyword>
<keyword id="KW-0444">Lipid biosynthesis</keyword>
<keyword id="KW-0443">Lipid metabolism</keyword>
<keyword id="KW-1185">Reference proteome</keyword>
<keyword id="KW-0677">Repeat</keyword>
<keyword id="KW-0808">Transferase</keyword>
<dbReference type="EC" id="2.3.1.129" evidence="1"/>
<dbReference type="EMBL" id="CP000478">
    <property type="protein sequence ID" value="ABK19419.1"/>
    <property type="molecule type" value="Genomic_DNA"/>
</dbReference>
<dbReference type="RefSeq" id="WP_011700544.1">
    <property type="nucleotide sequence ID" value="NC_008554.1"/>
</dbReference>
<dbReference type="SMR" id="A0LPR7"/>
<dbReference type="FunCoup" id="A0LPR7">
    <property type="interactions" value="414"/>
</dbReference>
<dbReference type="STRING" id="335543.Sfum_3749"/>
<dbReference type="KEGG" id="sfu:Sfum_3749"/>
<dbReference type="eggNOG" id="COG1043">
    <property type="taxonomic scope" value="Bacteria"/>
</dbReference>
<dbReference type="HOGENOM" id="CLU_061249_0_0_7"/>
<dbReference type="InParanoid" id="A0LPR7"/>
<dbReference type="OrthoDB" id="9807278at2"/>
<dbReference type="UniPathway" id="UPA00359">
    <property type="reaction ID" value="UER00477"/>
</dbReference>
<dbReference type="Proteomes" id="UP000001784">
    <property type="component" value="Chromosome"/>
</dbReference>
<dbReference type="GO" id="GO:0005737">
    <property type="term" value="C:cytoplasm"/>
    <property type="evidence" value="ECO:0007669"/>
    <property type="project" value="UniProtKB-SubCell"/>
</dbReference>
<dbReference type="GO" id="GO:0016020">
    <property type="term" value="C:membrane"/>
    <property type="evidence" value="ECO:0007669"/>
    <property type="project" value="GOC"/>
</dbReference>
<dbReference type="GO" id="GO:0008780">
    <property type="term" value="F:acyl-[acyl-carrier-protein]-UDP-N-acetylglucosamine O-acyltransferase activity"/>
    <property type="evidence" value="ECO:0007669"/>
    <property type="project" value="UniProtKB-UniRule"/>
</dbReference>
<dbReference type="GO" id="GO:0009245">
    <property type="term" value="P:lipid A biosynthetic process"/>
    <property type="evidence" value="ECO:0007669"/>
    <property type="project" value="UniProtKB-UniRule"/>
</dbReference>
<dbReference type="CDD" id="cd03351">
    <property type="entry name" value="LbH_UDP-GlcNAc_AT"/>
    <property type="match status" value="1"/>
</dbReference>
<dbReference type="Gene3D" id="2.160.10.10">
    <property type="entry name" value="Hexapeptide repeat proteins"/>
    <property type="match status" value="1"/>
</dbReference>
<dbReference type="Gene3D" id="1.20.1180.10">
    <property type="entry name" value="Udp N-acetylglucosamine O-acyltransferase, C-terminal domain"/>
    <property type="match status" value="1"/>
</dbReference>
<dbReference type="HAMAP" id="MF_00387">
    <property type="entry name" value="LpxA"/>
    <property type="match status" value="1"/>
</dbReference>
<dbReference type="InterPro" id="IPR029098">
    <property type="entry name" value="Acetyltransf_C"/>
</dbReference>
<dbReference type="InterPro" id="IPR037157">
    <property type="entry name" value="Acetyltransf_C_sf"/>
</dbReference>
<dbReference type="InterPro" id="IPR001451">
    <property type="entry name" value="Hexapep"/>
</dbReference>
<dbReference type="InterPro" id="IPR018357">
    <property type="entry name" value="Hexapep_transf_CS"/>
</dbReference>
<dbReference type="InterPro" id="IPR010137">
    <property type="entry name" value="Lipid_A_LpxA"/>
</dbReference>
<dbReference type="InterPro" id="IPR011004">
    <property type="entry name" value="Trimer_LpxA-like_sf"/>
</dbReference>
<dbReference type="NCBIfam" id="TIGR01852">
    <property type="entry name" value="lipid_A_lpxA"/>
    <property type="match status" value="1"/>
</dbReference>
<dbReference type="NCBIfam" id="NF003657">
    <property type="entry name" value="PRK05289.1"/>
    <property type="match status" value="1"/>
</dbReference>
<dbReference type="PANTHER" id="PTHR43480">
    <property type="entry name" value="ACYL-[ACYL-CARRIER-PROTEIN]--UDP-N-ACETYLGLUCOSAMINE O-ACYLTRANSFERASE"/>
    <property type="match status" value="1"/>
</dbReference>
<dbReference type="PANTHER" id="PTHR43480:SF1">
    <property type="entry name" value="ACYL-[ACYL-CARRIER-PROTEIN]--UDP-N-ACETYLGLUCOSAMINE O-ACYLTRANSFERASE, MITOCHONDRIAL-RELATED"/>
    <property type="match status" value="1"/>
</dbReference>
<dbReference type="Pfam" id="PF13720">
    <property type="entry name" value="Acetyltransf_11"/>
    <property type="match status" value="1"/>
</dbReference>
<dbReference type="Pfam" id="PF00132">
    <property type="entry name" value="Hexapep"/>
    <property type="match status" value="2"/>
</dbReference>
<dbReference type="PIRSF" id="PIRSF000456">
    <property type="entry name" value="UDP-GlcNAc_acltr"/>
    <property type="match status" value="1"/>
</dbReference>
<dbReference type="SUPFAM" id="SSF51161">
    <property type="entry name" value="Trimeric LpxA-like enzymes"/>
    <property type="match status" value="1"/>
</dbReference>
<dbReference type="PROSITE" id="PS00101">
    <property type="entry name" value="HEXAPEP_TRANSFERASES"/>
    <property type="match status" value="1"/>
</dbReference>
<sequence>MQIHPTAIVDSKAELADDVVIKAYSIIGPNVKIGPGTSVGPHAVIDGWTTIGARNQVCSFVAIGHPPQDFSYRDEETRVLIGDDNVFREHVSIHRGTRRGRGTTRVGSRNYIMSAAHIAHDCQIGDNVVMANVAVLGGHVEIGDFAALGGAVAVHQFVRIGTYSFIGGGSGISMDVPPYMLVVGSRPAKLYGLNTTGLKRHDFSANVLSALKKSYRILFRSGLNVRDAVDKIRVEVETCAEVELLLEFVGSSKRGVIR</sequence>
<organism>
    <name type="scientific">Syntrophobacter fumaroxidans (strain DSM 10017 / MPOB)</name>
    <dbReference type="NCBI Taxonomy" id="335543"/>
    <lineage>
        <taxon>Bacteria</taxon>
        <taxon>Pseudomonadati</taxon>
        <taxon>Thermodesulfobacteriota</taxon>
        <taxon>Syntrophobacteria</taxon>
        <taxon>Syntrophobacterales</taxon>
        <taxon>Syntrophobacteraceae</taxon>
        <taxon>Syntrophobacter</taxon>
    </lineage>
</organism>
<feature type="chain" id="PRO_0000302606" description="Acyl-[acyl-carrier-protein]--UDP-N-acetylglucosamine O-acyltransferase">
    <location>
        <begin position="1"/>
        <end position="258"/>
    </location>
</feature>
<comment type="function">
    <text evidence="1">Involved in the biosynthesis of lipid A, a phosphorylated glycolipid that anchors the lipopolysaccharide to the outer membrane of the cell.</text>
</comment>
<comment type="catalytic activity">
    <reaction evidence="1">
        <text>a (3R)-hydroxyacyl-[ACP] + UDP-N-acetyl-alpha-D-glucosamine = a UDP-3-O-[(3R)-3-hydroxyacyl]-N-acetyl-alpha-D-glucosamine + holo-[ACP]</text>
        <dbReference type="Rhea" id="RHEA:67812"/>
        <dbReference type="Rhea" id="RHEA-COMP:9685"/>
        <dbReference type="Rhea" id="RHEA-COMP:9945"/>
        <dbReference type="ChEBI" id="CHEBI:57705"/>
        <dbReference type="ChEBI" id="CHEBI:64479"/>
        <dbReference type="ChEBI" id="CHEBI:78827"/>
        <dbReference type="ChEBI" id="CHEBI:173225"/>
        <dbReference type="EC" id="2.3.1.129"/>
    </reaction>
</comment>
<comment type="pathway">
    <text evidence="1">Glycolipid biosynthesis; lipid IV(A) biosynthesis; lipid IV(A) from (3R)-3-hydroxytetradecanoyl-[acyl-carrier-protein] and UDP-N-acetyl-alpha-D-glucosamine: step 1/6.</text>
</comment>
<comment type="subunit">
    <text evidence="1">Homotrimer.</text>
</comment>
<comment type="subcellular location">
    <subcellularLocation>
        <location evidence="1">Cytoplasm</location>
    </subcellularLocation>
</comment>
<comment type="similarity">
    <text evidence="1">Belongs to the transferase hexapeptide repeat family. LpxA subfamily.</text>
</comment>